<gene>
    <name evidence="1" type="primary">rplR</name>
    <name type="ordered locus">DICTH_0853</name>
</gene>
<organism>
    <name type="scientific">Dictyoglomus thermophilum (strain ATCC 35947 / DSM 3960 / H-6-12)</name>
    <dbReference type="NCBI Taxonomy" id="309799"/>
    <lineage>
        <taxon>Bacteria</taxon>
        <taxon>Pseudomonadati</taxon>
        <taxon>Dictyoglomota</taxon>
        <taxon>Dictyoglomia</taxon>
        <taxon>Dictyoglomales</taxon>
        <taxon>Dictyoglomaceae</taxon>
        <taxon>Dictyoglomus</taxon>
    </lineage>
</organism>
<protein>
    <recommendedName>
        <fullName evidence="1">Large ribosomal subunit protein uL18</fullName>
    </recommendedName>
    <alternativeName>
        <fullName evidence="2">50S ribosomal protein L18</fullName>
    </alternativeName>
</protein>
<name>RL18_DICT6</name>
<sequence length="122" mass="13845">MIIKRSRKELRKIRHLRIRKKIIGTSERPRLAVYKSLRYIYAQIIDDTKGHTLVSASSLEKEIRSQLKSTKNIEAAKLVGEVIAKRALEKGIKKVVFDRGGFLYHGKVKALADSARAAGLEF</sequence>
<comment type="function">
    <text evidence="1">This is one of the proteins that bind and probably mediate the attachment of the 5S RNA into the large ribosomal subunit, where it forms part of the central protuberance.</text>
</comment>
<comment type="subunit">
    <text evidence="1">Part of the 50S ribosomal subunit; part of the 5S rRNA/L5/L18/L25 subcomplex. Contacts the 5S and 23S rRNAs.</text>
</comment>
<comment type="similarity">
    <text evidence="1">Belongs to the universal ribosomal protein uL18 family.</text>
</comment>
<accession>B5YDV9</accession>
<evidence type="ECO:0000255" key="1">
    <source>
        <dbReference type="HAMAP-Rule" id="MF_01337"/>
    </source>
</evidence>
<evidence type="ECO:0000305" key="2"/>
<reference key="1">
    <citation type="journal article" date="2014" name="Genome Announc.">
        <title>Complete Genome Sequence of the Extreme Thermophile Dictyoglomus thermophilum H-6-12.</title>
        <authorList>
            <person name="Coil D.A."/>
            <person name="Badger J.H."/>
            <person name="Forberger H.C."/>
            <person name="Riggs F."/>
            <person name="Madupu R."/>
            <person name="Fedorova N."/>
            <person name="Ward N."/>
            <person name="Robb F.T."/>
            <person name="Eisen J.A."/>
        </authorList>
    </citation>
    <scope>NUCLEOTIDE SEQUENCE [LARGE SCALE GENOMIC DNA]</scope>
    <source>
        <strain>ATCC 35947 / DSM 3960 / H-6-12</strain>
    </source>
</reference>
<proteinExistence type="inferred from homology"/>
<dbReference type="EMBL" id="CP001146">
    <property type="protein sequence ID" value="ACI19657.1"/>
    <property type="molecule type" value="Genomic_DNA"/>
</dbReference>
<dbReference type="RefSeq" id="WP_012548289.1">
    <property type="nucleotide sequence ID" value="NC_011297.1"/>
</dbReference>
<dbReference type="SMR" id="B5YDV9"/>
<dbReference type="STRING" id="309799.DICTH_0853"/>
<dbReference type="PaxDb" id="309799-DICTH_0853"/>
<dbReference type="KEGG" id="dth:DICTH_0853"/>
<dbReference type="eggNOG" id="COG0256">
    <property type="taxonomic scope" value="Bacteria"/>
</dbReference>
<dbReference type="HOGENOM" id="CLU_098841_0_1_0"/>
<dbReference type="OrthoDB" id="9810939at2"/>
<dbReference type="Proteomes" id="UP000001733">
    <property type="component" value="Chromosome"/>
</dbReference>
<dbReference type="GO" id="GO:0022625">
    <property type="term" value="C:cytosolic large ribosomal subunit"/>
    <property type="evidence" value="ECO:0007669"/>
    <property type="project" value="TreeGrafter"/>
</dbReference>
<dbReference type="GO" id="GO:0008097">
    <property type="term" value="F:5S rRNA binding"/>
    <property type="evidence" value="ECO:0007669"/>
    <property type="project" value="TreeGrafter"/>
</dbReference>
<dbReference type="GO" id="GO:0003735">
    <property type="term" value="F:structural constituent of ribosome"/>
    <property type="evidence" value="ECO:0007669"/>
    <property type="project" value="InterPro"/>
</dbReference>
<dbReference type="GO" id="GO:0006412">
    <property type="term" value="P:translation"/>
    <property type="evidence" value="ECO:0007669"/>
    <property type="project" value="UniProtKB-UniRule"/>
</dbReference>
<dbReference type="CDD" id="cd00432">
    <property type="entry name" value="Ribosomal_L18_L5e"/>
    <property type="match status" value="1"/>
</dbReference>
<dbReference type="FunFam" id="3.30.420.100:FF:000001">
    <property type="entry name" value="50S ribosomal protein L18"/>
    <property type="match status" value="1"/>
</dbReference>
<dbReference type="Gene3D" id="3.30.420.100">
    <property type="match status" value="1"/>
</dbReference>
<dbReference type="HAMAP" id="MF_01337_B">
    <property type="entry name" value="Ribosomal_uL18_B"/>
    <property type="match status" value="1"/>
</dbReference>
<dbReference type="InterPro" id="IPR004389">
    <property type="entry name" value="Ribosomal_uL18_bac-type"/>
</dbReference>
<dbReference type="InterPro" id="IPR005484">
    <property type="entry name" value="Ribosomal_uL18_bac/euk"/>
</dbReference>
<dbReference type="NCBIfam" id="TIGR00060">
    <property type="entry name" value="L18_bact"/>
    <property type="match status" value="1"/>
</dbReference>
<dbReference type="PANTHER" id="PTHR12899">
    <property type="entry name" value="39S RIBOSOMAL PROTEIN L18, MITOCHONDRIAL"/>
    <property type="match status" value="1"/>
</dbReference>
<dbReference type="PANTHER" id="PTHR12899:SF3">
    <property type="entry name" value="LARGE RIBOSOMAL SUBUNIT PROTEIN UL18M"/>
    <property type="match status" value="1"/>
</dbReference>
<dbReference type="Pfam" id="PF00861">
    <property type="entry name" value="Ribosomal_L18p"/>
    <property type="match status" value="1"/>
</dbReference>
<dbReference type="SUPFAM" id="SSF53137">
    <property type="entry name" value="Translational machinery components"/>
    <property type="match status" value="1"/>
</dbReference>
<feature type="chain" id="PRO_1000142654" description="Large ribosomal subunit protein uL18">
    <location>
        <begin position="1"/>
        <end position="122"/>
    </location>
</feature>
<keyword id="KW-0687">Ribonucleoprotein</keyword>
<keyword id="KW-0689">Ribosomal protein</keyword>
<keyword id="KW-0694">RNA-binding</keyword>
<keyword id="KW-0699">rRNA-binding</keyword>